<protein>
    <recommendedName>
        <fullName evidence="1">Phosphoglycerate kinase</fullName>
        <ecNumber evidence="1">2.7.2.3</ecNumber>
    </recommendedName>
</protein>
<gene>
    <name evidence="1" type="primary">pgk</name>
    <name type="ordered locus">BARBAKC583_0140</name>
</gene>
<name>PGK_BARBK</name>
<sequence length="400" mass="43421">MKFRTINEANVSGKRVLVRVDFNVPMSQGKVCDNTRLERHKETICALQKRGAKIILLSHCSRPRGKIVPELSLRPVAKALETIMGQQIFFVEECIGAPVQTAVEALQEGQILLLENLRFYKEEEDNNADFAEALAQQGDLYVNDAFSVSHRAHASVEAITHYLPSYAGMALQRELQALEKGLDNPKKPVTAIVGGAKVSSKLFVLNHLVTKVDYLVIGGGMANNFLMAQGHNVGKSLCEPMLMDMVKDVIEKARESHCTLVLPVDAVVGLQCETGTPHHHCMIEAIPDEGMILDIGEHSIARINTVIDASATLVWNGPLGVFEVSPFDHGTIAVARYAAARSQKGHCVSIAGGGDTVFALNHAGVADDFTYLSTAGGAFLEWMEGKTLPGVLALMQDLKN</sequence>
<keyword id="KW-0067">ATP-binding</keyword>
<keyword id="KW-0963">Cytoplasm</keyword>
<keyword id="KW-0324">Glycolysis</keyword>
<keyword id="KW-0418">Kinase</keyword>
<keyword id="KW-0547">Nucleotide-binding</keyword>
<keyword id="KW-0808">Transferase</keyword>
<evidence type="ECO:0000255" key="1">
    <source>
        <dbReference type="HAMAP-Rule" id="MF_00145"/>
    </source>
</evidence>
<comment type="catalytic activity">
    <reaction evidence="1">
        <text>(2R)-3-phosphoglycerate + ATP = (2R)-3-phospho-glyceroyl phosphate + ADP</text>
        <dbReference type="Rhea" id="RHEA:14801"/>
        <dbReference type="ChEBI" id="CHEBI:30616"/>
        <dbReference type="ChEBI" id="CHEBI:57604"/>
        <dbReference type="ChEBI" id="CHEBI:58272"/>
        <dbReference type="ChEBI" id="CHEBI:456216"/>
        <dbReference type="EC" id="2.7.2.3"/>
    </reaction>
</comment>
<comment type="pathway">
    <text evidence="1">Carbohydrate degradation; glycolysis; pyruvate from D-glyceraldehyde 3-phosphate: step 2/5.</text>
</comment>
<comment type="subunit">
    <text evidence="1">Monomer.</text>
</comment>
<comment type="subcellular location">
    <subcellularLocation>
        <location evidence="1">Cytoplasm</location>
    </subcellularLocation>
</comment>
<comment type="similarity">
    <text evidence="1">Belongs to the phosphoglycerate kinase family.</text>
</comment>
<reference key="1">
    <citation type="submission" date="2006-12" db="EMBL/GenBank/DDBJ databases">
        <authorList>
            <person name="Hendrix L."/>
            <person name="Mohamoud Y."/>
            <person name="Radune D."/>
            <person name="Shvartsbeyn A."/>
            <person name="Daugherty S."/>
            <person name="Dodson R."/>
            <person name="Durkin A.S."/>
            <person name="Harkins D."/>
            <person name="Huot H."/>
            <person name="Kothari S.P."/>
            <person name="Madupu R."/>
            <person name="Li J."/>
            <person name="Nelson W.C."/>
            <person name="Shrivastava S."/>
            <person name="Giglio M.G."/>
            <person name="Haft D."/>
            <person name="Selengut J."/>
            <person name="Fraser-Ligget C."/>
            <person name="Seshadri R."/>
        </authorList>
    </citation>
    <scope>NUCLEOTIDE SEQUENCE [LARGE SCALE GENOMIC DNA]</scope>
    <source>
        <strain>ATCC 35685 / KC583 / Herrer 020/F12,63</strain>
    </source>
</reference>
<accession>A1UR75</accession>
<proteinExistence type="inferred from homology"/>
<feature type="chain" id="PRO_1000057969" description="Phosphoglycerate kinase">
    <location>
        <begin position="1"/>
        <end position="400"/>
    </location>
</feature>
<feature type="binding site" evidence="1">
    <location>
        <begin position="21"/>
        <end position="23"/>
    </location>
    <ligand>
        <name>substrate</name>
    </ligand>
</feature>
<feature type="binding site" evidence="1">
    <location>
        <position position="36"/>
    </location>
    <ligand>
        <name>substrate</name>
    </ligand>
</feature>
<feature type="binding site" evidence="1">
    <location>
        <begin position="59"/>
        <end position="62"/>
    </location>
    <ligand>
        <name>substrate</name>
    </ligand>
</feature>
<feature type="binding site" evidence="1">
    <location>
        <position position="118"/>
    </location>
    <ligand>
        <name>substrate</name>
    </ligand>
</feature>
<feature type="binding site" evidence="1">
    <location>
        <position position="151"/>
    </location>
    <ligand>
        <name>substrate</name>
    </ligand>
</feature>
<feature type="binding site" evidence="1">
    <location>
        <position position="201"/>
    </location>
    <ligand>
        <name>ATP</name>
        <dbReference type="ChEBI" id="CHEBI:30616"/>
    </ligand>
</feature>
<feature type="binding site" evidence="1">
    <location>
        <position position="323"/>
    </location>
    <ligand>
        <name>ATP</name>
        <dbReference type="ChEBI" id="CHEBI:30616"/>
    </ligand>
</feature>
<feature type="binding site" evidence="1">
    <location>
        <begin position="353"/>
        <end position="356"/>
    </location>
    <ligand>
        <name>ATP</name>
        <dbReference type="ChEBI" id="CHEBI:30616"/>
    </ligand>
</feature>
<organism>
    <name type="scientific">Bartonella bacilliformis (strain ATCC 35685 / KC583 / Herrer 020/F12,63)</name>
    <dbReference type="NCBI Taxonomy" id="360095"/>
    <lineage>
        <taxon>Bacteria</taxon>
        <taxon>Pseudomonadati</taxon>
        <taxon>Pseudomonadota</taxon>
        <taxon>Alphaproteobacteria</taxon>
        <taxon>Hyphomicrobiales</taxon>
        <taxon>Bartonellaceae</taxon>
        <taxon>Bartonella</taxon>
    </lineage>
</organism>
<dbReference type="EC" id="2.7.2.3" evidence="1"/>
<dbReference type="EMBL" id="CP000524">
    <property type="protein sequence ID" value="ABM45059.1"/>
    <property type="molecule type" value="Genomic_DNA"/>
</dbReference>
<dbReference type="RefSeq" id="WP_005765917.1">
    <property type="nucleotide sequence ID" value="NC_008783.1"/>
</dbReference>
<dbReference type="SMR" id="A1UR75"/>
<dbReference type="STRING" id="360095.BARBAKC583_0140"/>
<dbReference type="GeneID" id="4684315"/>
<dbReference type="KEGG" id="bbk:BARBAKC583_0140"/>
<dbReference type="PATRIC" id="fig|360095.6.peg.140"/>
<dbReference type="eggNOG" id="COG0126">
    <property type="taxonomic scope" value="Bacteria"/>
</dbReference>
<dbReference type="HOGENOM" id="CLU_025427_0_2_5"/>
<dbReference type="OrthoDB" id="9808460at2"/>
<dbReference type="UniPathway" id="UPA00109">
    <property type="reaction ID" value="UER00185"/>
</dbReference>
<dbReference type="Proteomes" id="UP000000643">
    <property type="component" value="Chromosome"/>
</dbReference>
<dbReference type="GO" id="GO:0005829">
    <property type="term" value="C:cytosol"/>
    <property type="evidence" value="ECO:0007669"/>
    <property type="project" value="TreeGrafter"/>
</dbReference>
<dbReference type="GO" id="GO:0043531">
    <property type="term" value="F:ADP binding"/>
    <property type="evidence" value="ECO:0007669"/>
    <property type="project" value="TreeGrafter"/>
</dbReference>
<dbReference type="GO" id="GO:0005524">
    <property type="term" value="F:ATP binding"/>
    <property type="evidence" value="ECO:0007669"/>
    <property type="project" value="UniProtKB-KW"/>
</dbReference>
<dbReference type="GO" id="GO:0004618">
    <property type="term" value="F:phosphoglycerate kinase activity"/>
    <property type="evidence" value="ECO:0007669"/>
    <property type="project" value="UniProtKB-UniRule"/>
</dbReference>
<dbReference type="GO" id="GO:0006094">
    <property type="term" value="P:gluconeogenesis"/>
    <property type="evidence" value="ECO:0007669"/>
    <property type="project" value="TreeGrafter"/>
</dbReference>
<dbReference type="GO" id="GO:0006096">
    <property type="term" value="P:glycolytic process"/>
    <property type="evidence" value="ECO:0007669"/>
    <property type="project" value="UniProtKB-UniRule"/>
</dbReference>
<dbReference type="FunFam" id="3.40.50.1260:FF:000006">
    <property type="entry name" value="Phosphoglycerate kinase"/>
    <property type="match status" value="1"/>
</dbReference>
<dbReference type="FunFam" id="3.40.50.1260:FF:000031">
    <property type="entry name" value="Phosphoglycerate kinase 1"/>
    <property type="match status" value="1"/>
</dbReference>
<dbReference type="Gene3D" id="3.40.50.1260">
    <property type="entry name" value="Phosphoglycerate kinase, N-terminal domain"/>
    <property type="match status" value="2"/>
</dbReference>
<dbReference type="HAMAP" id="MF_00145">
    <property type="entry name" value="Phosphoglyc_kinase"/>
    <property type="match status" value="1"/>
</dbReference>
<dbReference type="InterPro" id="IPR001576">
    <property type="entry name" value="Phosphoglycerate_kinase"/>
</dbReference>
<dbReference type="InterPro" id="IPR015911">
    <property type="entry name" value="Phosphoglycerate_kinase_CS"/>
</dbReference>
<dbReference type="InterPro" id="IPR015824">
    <property type="entry name" value="Phosphoglycerate_kinase_N"/>
</dbReference>
<dbReference type="InterPro" id="IPR036043">
    <property type="entry name" value="Phosphoglycerate_kinase_sf"/>
</dbReference>
<dbReference type="PANTHER" id="PTHR11406">
    <property type="entry name" value="PHOSPHOGLYCERATE KINASE"/>
    <property type="match status" value="1"/>
</dbReference>
<dbReference type="PANTHER" id="PTHR11406:SF23">
    <property type="entry name" value="PHOSPHOGLYCERATE KINASE 1, CHLOROPLASTIC-RELATED"/>
    <property type="match status" value="1"/>
</dbReference>
<dbReference type="Pfam" id="PF00162">
    <property type="entry name" value="PGK"/>
    <property type="match status" value="1"/>
</dbReference>
<dbReference type="PIRSF" id="PIRSF000724">
    <property type="entry name" value="Pgk"/>
    <property type="match status" value="1"/>
</dbReference>
<dbReference type="PRINTS" id="PR00477">
    <property type="entry name" value="PHGLYCKINASE"/>
</dbReference>
<dbReference type="SUPFAM" id="SSF53748">
    <property type="entry name" value="Phosphoglycerate kinase"/>
    <property type="match status" value="1"/>
</dbReference>
<dbReference type="PROSITE" id="PS00111">
    <property type="entry name" value="PGLYCERATE_KINASE"/>
    <property type="match status" value="1"/>
</dbReference>